<organism>
    <name type="scientific">Coxiella burnetii (strain CbuK_Q154)</name>
    <name type="common">Coxiella burnetii (strain Q154)</name>
    <dbReference type="NCBI Taxonomy" id="434924"/>
    <lineage>
        <taxon>Bacteria</taxon>
        <taxon>Pseudomonadati</taxon>
        <taxon>Pseudomonadota</taxon>
        <taxon>Gammaproteobacteria</taxon>
        <taxon>Legionellales</taxon>
        <taxon>Coxiellaceae</taxon>
        <taxon>Coxiella</taxon>
    </lineage>
</organism>
<keyword id="KW-0004">4Fe-4S</keyword>
<keyword id="KW-0408">Iron</keyword>
<keyword id="KW-0411">Iron-sulfur</keyword>
<keyword id="KW-0456">Lyase</keyword>
<keyword id="KW-0479">Metal-binding</keyword>
<keyword id="KW-0949">S-adenosyl-L-methionine</keyword>
<keyword id="KW-0784">Thiamine biosynthesis</keyword>
<keyword id="KW-0862">Zinc</keyword>
<gene>
    <name evidence="1" type="primary">thiC</name>
    <name type="ordered locus">CbuK_0526</name>
</gene>
<name>THIC_COXB1</name>
<comment type="function">
    <text evidence="1">Catalyzes the synthesis of the hydroxymethylpyrimidine phosphate (HMP-P) moiety of thiamine from aminoimidazole ribotide (AIR) in a radical S-adenosyl-L-methionine (SAM)-dependent reaction.</text>
</comment>
<comment type="catalytic activity">
    <reaction evidence="1">
        <text>5-amino-1-(5-phospho-beta-D-ribosyl)imidazole + S-adenosyl-L-methionine = 4-amino-2-methyl-5-(phosphooxymethyl)pyrimidine + CO + 5'-deoxyadenosine + formate + L-methionine + 3 H(+)</text>
        <dbReference type="Rhea" id="RHEA:24840"/>
        <dbReference type="ChEBI" id="CHEBI:15378"/>
        <dbReference type="ChEBI" id="CHEBI:15740"/>
        <dbReference type="ChEBI" id="CHEBI:17245"/>
        <dbReference type="ChEBI" id="CHEBI:17319"/>
        <dbReference type="ChEBI" id="CHEBI:57844"/>
        <dbReference type="ChEBI" id="CHEBI:58354"/>
        <dbReference type="ChEBI" id="CHEBI:59789"/>
        <dbReference type="ChEBI" id="CHEBI:137981"/>
        <dbReference type="EC" id="4.1.99.17"/>
    </reaction>
</comment>
<comment type="cofactor">
    <cofactor evidence="1">
        <name>[4Fe-4S] cluster</name>
        <dbReference type="ChEBI" id="CHEBI:49883"/>
    </cofactor>
    <text evidence="1">Binds 1 [4Fe-4S] cluster per subunit. The cluster is coordinated with 3 cysteines and an exchangeable S-adenosyl-L-methionine.</text>
</comment>
<comment type="pathway">
    <text evidence="1">Cofactor biosynthesis; thiamine diphosphate biosynthesis.</text>
</comment>
<comment type="subunit">
    <text evidence="1">Homodimer.</text>
</comment>
<comment type="similarity">
    <text evidence="1">Belongs to the ThiC family.</text>
</comment>
<proteinExistence type="inferred from homology"/>
<accession>B6J5W3</accession>
<evidence type="ECO:0000255" key="1">
    <source>
        <dbReference type="HAMAP-Rule" id="MF_00089"/>
    </source>
</evidence>
<dbReference type="EC" id="4.1.99.17" evidence="1"/>
<dbReference type="EMBL" id="CP001020">
    <property type="protein sequence ID" value="ACJ19805.1"/>
    <property type="molecule type" value="Genomic_DNA"/>
</dbReference>
<dbReference type="SMR" id="B6J5W3"/>
<dbReference type="KEGG" id="cbc:CbuK_0526"/>
<dbReference type="HOGENOM" id="CLU_013181_2_1_6"/>
<dbReference type="UniPathway" id="UPA00060"/>
<dbReference type="GO" id="GO:0005829">
    <property type="term" value="C:cytosol"/>
    <property type="evidence" value="ECO:0007669"/>
    <property type="project" value="TreeGrafter"/>
</dbReference>
<dbReference type="GO" id="GO:0051539">
    <property type="term" value="F:4 iron, 4 sulfur cluster binding"/>
    <property type="evidence" value="ECO:0007669"/>
    <property type="project" value="UniProtKB-KW"/>
</dbReference>
<dbReference type="GO" id="GO:0016830">
    <property type="term" value="F:carbon-carbon lyase activity"/>
    <property type="evidence" value="ECO:0007669"/>
    <property type="project" value="InterPro"/>
</dbReference>
<dbReference type="GO" id="GO:0008270">
    <property type="term" value="F:zinc ion binding"/>
    <property type="evidence" value="ECO:0007669"/>
    <property type="project" value="UniProtKB-UniRule"/>
</dbReference>
<dbReference type="GO" id="GO:0009228">
    <property type="term" value="P:thiamine biosynthetic process"/>
    <property type="evidence" value="ECO:0007669"/>
    <property type="project" value="UniProtKB-KW"/>
</dbReference>
<dbReference type="GO" id="GO:0009229">
    <property type="term" value="P:thiamine diphosphate biosynthetic process"/>
    <property type="evidence" value="ECO:0007669"/>
    <property type="project" value="UniProtKB-UniRule"/>
</dbReference>
<dbReference type="FunFam" id="3.20.20.540:FF:000001">
    <property type="entry name" value="Phosphomethylpyrimidine synthase"/>
    <property type="match status" value="1"/>
</dbReference>
<dbReference type="Gene3D" id="6.10.250.620">
    <property type="match status" value="1"/>
</dbReference>
<dbReference type="Gene3D" id="3.20.20.540">
    <property type="entry name" value="Radical SAM ThiC family, central domain"/>
    <property type="match status" value="1"/>
</dbReference>
<dbReference type="HAMAP" id="MF_00089">
    <property type="entry name" value="ThiC"/>
    <property type="match status" value="1"/>
</dbReference>
<dbReference type="InterPro" id="IPR037509">
    <property type="entry name" value="ThiC"/>
</dbReference>
<dbReference type="InterPro" id="IPR025747">
    <property type="entry name" value="ThiC-associated_dom"/>
</dbReference>
<dbReference type="InterPro" id="IPR038521">
    <property type="entry name" value="ThiC/Bza_core_dom"/>
</dbReference>
<dbReference type="InterPro" id="IPR002817">
    <property type="entry name" value="ThiC/BzaA/B"/>
</dbReference>
<dbReference type="NCBIfam" id="NF006763">
    <property type="entry name" value="PRK09284.1"/>
    <property type="match status" value="1"/>
</dbReference>
<dbReference type="NCBIfam" id="NF009895">
    <property type="entry name" value="PRK13352.1"/>
    <property type="match status" value="1"/>
</dbReference>
<dbReference type="NCBIfam" id="TIGR00190">
    <property type="entry name" value="thiC"/>
    <property type="match status" value="1"/>
</dbReference>
<dbReference type="PANTHER" id="PTHR30557:SF1">
    <property type="entry name" value="PHOSPHOMETHYLPYRIMIDINE SYNTHASE, CHLOROPLASTIC"/>
    <property type="match status" value="1"/>
</dbReference>
<dbReference type="PANTHER" id="PTHR30557">
    <property type="entry name" value="THIAMINE BIOSYNTHESIS PROTEIN THIC"/>
    <property type="match status" value="1"/>
</dbReference>
<dbReference type="Pfam" id="PF13667">
    <property type="entry name" value="ThiC-associated"/>
    <property type="match status" value="1"/>
</dbReference>
<dbReference type="Pfam" id="PF01964">
    <property type="entry name" value="ThiC_Rad_SAM"/>
    <property type="match status" value="1"/>
</dbReference>
<dbReference type="SFLD" id="SFLDF00407">
    <property type="entry name" value="phosphomethylpyrimidine_syntha"/>
    <property type="match status" value="1"/>
</dbReference>
<dbReference type="SFLD" id="SFLDG01114">
    <property type="entry name" value="phosphomethylpyrimidine_syntha"/>
    <property type="match status" value="1"/>
</dbReference>
<dbReference type="SFLD" id="SFLDS00113">
    <property type="entry name" value="Radical_SAM_Phosphomethylpyrim"/>
    <property type="match status" value="1"/>
</dbReference>
<protein>
    <recommendedName>
        <fullName evidence="1">Phosphomethylpyrimidine synthase</fullName>
        <ecNumber evidence="1">4.1.99.17</ecNumber>
    </recommendedName>
    <alternativeName>
        <fullName evidence="1">Hydroxymethylpyrimidine phosphate synthase</fullName>
        <shortName evidence="1">HMP-P synthase</shortName>
        <shortName evidence="1">HMP-phosphate synthase</shortName>
        <shortName evidence="1">HMPP synthase</shortName>
    </alternativeName>
    <alternativeName>
        <fullName evidence="1">Thiamine biosynthesis protein ThiC</fullName>
    </alternativeName>
</protein>
<reference key="1">
    <citation type="journal article" date="2009" name="Infect. Immun.">
        <title>Comparative genomics reveal extensive transposon-mediated genomic plasticity and diversity among potential effector proteins within the genus Coxiella.</title>
        <authorList>
            <person name="Beare P.A."/>
            <person name="Unsworth N."/>
            <person name="Andoh M."/>
            <person name="Voth D.E."/>
            <person name="Omsland A."/>
            <person name="Gilk S.D."/>
            <person name="Williams K.P."/>
            <person name="Sobral B.W."/>
            <person name="Kupko J.J. III"/>
            <person name="Porcella S.F."/>
            <person name="Samuel J.E."/>
            <person name="Heinzen R.A."/>
        </authorList>
    </citation>
    <scope>NUCLEOTIDE SEQUENCE [LARGE SCALE GENOMIC DNA]</scope>
    <source>
        <strain>CbuK_Q154</strain>
    </source>
</reference>
<feature type="chain" id="PRO_1000198049" description="Phosphomethylpyrimidine synthase">
    <location>
        <begin position="1"/>
        <end position="554"/>
    </location>
</feature>
<feature type="binding site" evidence="1">
    <location>
        <position position="188"/>
    </location>
    <ligand>
        <name>substrate</name>
    </ligand>
</feature>
<feature type="binding site" evidence="1">
    <location>
        <position position="217"/>
    </location>
    <ligand>
        <name>substrate</name>
    </ligand>
</feature>
<feature type="binding site" evidence="1">
    <location>
        <position position="246"/>
    </location>
    <ligand>
        <name>substrate</name>
    </ligand>
</feature>
<feature type="binding site" evidence="1">
    <location>
        <position position="282"/>
    </location>
    <ligand>
        <name>substrate</name>
    </ligand>
</feature>
<feature type="binding site" evidence="1">
    <location>
        <begin position="302"/>
        <end position="304"/>
    </location>
    <ligand>
        <name>substrate</name>
    </ligand>
</feature>
<feature type="binding site" evidence="1">
    <location>
        <begin position="343"/>
        <end position="346"/>
    </location>
    <ligand>
        <name>substrate</name>
    </ligand>
</feature>
<feature type="binding site" evidence="1">
    <location>
        <position position="382"/>
    </location>
    <ligand>
        <name>substrate</name>
    </ligand>
</feature>
<feature type="binding site" evidence="1">
    <location>
        <position position="386"/>
    </location>
    <ligand>
        <name>Zn(2+)</name>
        <dbReference type="ChEBI" id="CHEBI:29105"/>
    </ligand>
</feature>
<feature type="binding site" evidence="1">
    <location>
        <position position="409"/>
    </location>
    <ligand>
        <name>substrate</name>
    </ligand>
</feature>
<feature type="binding site" evidence="1">
    <location>
        <position position="450"/>
    </location>
    <ligand>
        <name>Zn(2+)</name>
        <dbReference type="ChEBI" id="CHEBI:29105"/>
    </ligand>
</feature>
<feature type="binding site" evidence="1">
    <location>
        <position position="530"/>
    </location>
    <ligand>
        <name>[4Fe-4S] cluster</name>
        <dbReference type="ChEBI" id="CHEBI:49883"/>
        <note>4Fe-4S-S-AdoMet</note>
    </ligand>
</feature>
<feature type="binding site" evidence="1">
    <location>
        <position position="533"/>
    </location>
    <ligand>
        <name>[4Fe-4S] cluster</name>
        <dbReference type="ChEBI" id="CHEBI:49883"/>
        <note>4Fe-4S-S-AdoMet</note>
    </ligand>
</feature>
<feature type="binding site" evidence="1">
    <location>
        <position position="538"/>
    </location>
    <ligand>
        <name>[4Fe-4S] cluster</name>
        <dbReference type="ChEBI" id="CHEBI:49883"/>
        <note>4Fe-4S-S-AdoMet</note>
    </ligand>
</feature>
<sequence>MRREGTTRLHRTFLLRVYLKESAVITYPASKKIYCQGKIFPTIRVGMREIQLTNGDSLTLYDTSGPYSDPNISIKSPQGLPRLREPWIKVRPRKTQLAFAKEGVITPEMEYAAIRENQKRELKKNTDQERERRLQGNSLSARIPNPITPEFIRNEIACGRAILPANINHPESEPMIIGRHFLVKVNANIGNSSLTSSVEEEVEKLIWALRWGADTVMDLSTGKKIKEIRETILRHSPVPIGTVPLYEALEKVDGDVKALTWEIFRDTLISQAEQGVDYFTIHAGVLNRFIPLTQKRVTGIVSRGGSLMAKWCLLHREENFLYTHFTEICEIMRAYDVSFSLGDGLRPGSIADANDEAQFAELKIQGELNRIAWKYGVQVMNEGPGHIPLNLIEENMTKQLAYCREAPFYTLGPLTTDIAPGYDHIGSAIGAAFIAWQGCALLCYVTPKEHLGLPNKQDVKEGLIAYKIAAHAADLAKGHPAARQRDDLLSQARFEFRWHDQFNLALDAETARLFHDETLPKEAAKHAHFCSLCGPKFCAYKTSHEVRDTLQKVT</sequence>